<proteinExistence type="inferred from homology"/>
<name>DXS_PSYCK</name>
<organism>
    <name type="scientific">Psychrobacter cryohalolentis (strain ATCC BAA-1226 / DSM 17306 / VKM B-2378 / K5)</name>
    <dbReference type="NCBI Taxonomy" id="335284"/>
    <lineage>
        <taxon>Bacteria</taxon>
        <taxon>Pseudomonadati</taxon>
        <taxon>Pseudomonadota</taxon>
        <taxon>Gammaproteobacteria</taxon>
        <taxon>Moraxellales</taxon>
        <taxon>Moraxellaceae</taxon>
        <taxon>Psychrobacter</taxon>
    </lineage>
</organism>
<reference key="1">
    <citation type="submission" date="2006-03" db="EMBL/GenBank/DDBJ databases">
        <title>Complete sequence of chromosome of Psychrobacter cryohalolentis K5.</title>
        <authorList>
            <consortium name="US DOE Joint Genome Institute"/>
            <person name="Copeland A."/>
            <person name="Lucas S."/>
            <person name="Lapidus A."/>
            <person name="Barry K."/>
            <person name="Detter J.C."/>
            <person name="Glavina T."/>
            <person name="Hammon N."/>
            <person name="Israni S."/>
            <person name="Dalin E."/>
            <person name="Tice H."/>
            <person name="Pitluck S."/>
            <person name="Brettin T."/>
            <person name="Bruce D."/>
            <person name="Han C."/>
            <person name="Tapia R."/>
            <person name="Sims D.R."/>
            <person name="Gilna P."/>
            <person name="Schmutz J."/>
            <person name="Larimer F."/>
            <person name="Land M."/>
            <person name="Hauser L."/>
            <person name="Kyrpides N."/>
            <person name="Kim E."/>
            <person name="Richardson P."/>
        </authorList>
    </citation>
    <scope>NUCLEOTIDE SEQUENCE [LARGE SCALE GENOMIC DNA]</scope>
    <source>
        <strain>ATCC BAA-1226 / DSM 17306 / VKM B-2378 / K5</strain>
    </source>
</reference>
<comment type="function">
    <text evidence="1">Catalyzes the acyloin condensation reaction between C atoms 2 and 3 of pyruvate and glyceraldehyde 3-phosphate to yield 1-deoxy-D-xylulose-5-phosphate (DXP).</text>
</comment>
<comment type="catalytic activity">
    <reaction evidence="1">
        <text>D-glyceraldehyde 3-phosphate + pyruvate + H(+) = 1-deoxy-D-xylulose 5-phosphate + CO2</text>
        <dbReference type="Rhea" id="RHEA:12605"/>
        <dbReference type="ChEBI" id="CHEBI:15361"/>
        <dbReference type="ChEBI" id="CHEBI:15378"/>
        <dbReference type="ChEBI" id="CHEBI:16526"/>
        <dbReference type="ChEBI" id="CHEBI:57792"/>
        <dbReference type="ChEBI" id="CHEBI:59776"/>
        <dbReference type="EC" id="2.2.1.7"/>
    </reaction>
</comment>
<comment type="cofactor">
    <cofactor evidence="1">
        <name>Mg(2+)</name>
        <dbReference type="ChEBI" id="CHEBI:18420"/>
    </cofactor>
    <text evidence="1">Binds 1 Mg(2+) ion per subunit.</text>
</comment>
<comment type="cofactor">
    <cofactor evidence="1">
        <name>thiamine diphosphate</name>
        <dbReference type="ChEBI" id="CHEBI:58937"/>
    </cofactor>
    <text evidence="1">Binds 1 thiamine pyrophosphate per subunit.</text>
</comment>
<comment type="pathway">
    <text evidence="1">Metabolic intermediate biosynthesis; 1-deoxy-D-xylulose 5-phosphate biosynthesis; 1-deoxy-D-xylulose 5-phosphate from D-glyceraldehyde 3-phosphate and pyruvate: step 1/1.</text>
</comment>
<comment type="subunit">
    <text evidence="1">Homodimer.</text>
</comment>
<comment type="similarity">
    <text evidence="1">Belongs to the transketolase family. DXPS subfamily.</text>
</comment>
<gene>
    <name evidence="1" type="primary">dxs</name>
    <name type="ordered locus">Pcryo_0245</name>
</gene>
<accession>Q1QE74</accession>
<protein>
    <recommendedName>
        <fullName evidence="1">1-deoxy-D-xylulose-5-phosphate synthase</fullName>
        <ecNumber evidence="1">2.2.1.7</ecNumber>
    </recommendedName>
    <alternativeName>
        <fullName evidence="1">1-deoxyxylulose-5-phosphate synthase</fullName>
        <shortName evidence="1">DXP synthase</shortName>
        <shortName evidence="1">DXPS</shortName>
    </alternativeName>
</protein>
<feature type="chain" id="PRO_0000256464" description="1-deoxy-D-xylulose-5-phosphate synthase">
    <location>
        <begin position="1"/>
        <end position="680"/>
    </location>
</feature>
<feature type="region of interest" description="Disordered" evidence="2">
    <location>
        <begin position="1"/>
        <end position="20"/>
    </location>
</feature>
<feature type="compositionally biased region" description="Low complexity" evidence="2">
    <location>
        <begin position="1"/>
        <end position="17"/>
    </location>
</feature>
<feature type="binding site" evidence="1">
    <location>
        <position position="113"/>
    </location>
    <ligand>
        <name>thiamine diphosphate</name>
        <dbReference type="ChEBI" id="CHEBI:58937"/>
    </ligand>
</feature>
<feature type="binding site" evidence="1">
    <location>
        <begin position="154"/>
        <end position="156"/>
    </location>
    <ligand>
        <name>thiamine diphosphate</name>
        <dbReference type="ChEBI" id="CHEBI:58937"/>
    </ligand>
</feature>
<feature type="binding site" evidence="1">
    <location>
        <position position="185"/>
    </location>
    <ligand>
        <name>Mg(2+)</name>
        <dbReference type="ChEBI" id="CHEBI:18420"/>
    </ligand>
</feature>
<feature type="binding site" evidence="1">
    <location>
        <begin position="186"/>
        <end position="187"/>
    </location>
    <ligand>
        <name>thiamine diphosphate</name>
        <dbReference type="ChEBI" id="CHEBI:58937"/>
    </ligand>
</feature>
<feature type="binding site" evidence="1">
    <location>
        <position position="214"/>
    </location>
    <ligand>
        <name>Mg(2+)</name>
        <dbReference type="ChEBI" id="CHEBI:18420"/>
    </ligand>
</feature>
<feature type="binding site" evidence="1">
    <location>
        <position position="214"/>
    </location>
    <ligand>
        <name>thiamine diphosphate</name>
        <dbReference type="ChEBI" id="CHEBI:58937"/>
    </ligand>
</feature>
<feature type="binding site" evidence="1">
    <location>
        <position position="323"/>
    </location>
    <ligand>
        <name>thiamine diphosphate</name>
        <dbReference type="ChEBI" id="CHEBI:58937"/>
    </ligand>
</feature>
<feature type="binding site" evidence="1">
    <location>
        <position position="408"/>
    </location>
    <ligand>
        <name>thiamine diphosphate</name>
        <dbReference type="ChEBI" id="CHEBI:58937"/>
    </ligand>
</feature>
<keyword id="KW-0414">Isoprene biosynthesis</keyword>
<keyword id="KW-0460">Magnesium</keyword>
<keyword id="KW-0479">Metal-binding</keyword>
<keyword id="KW-0784">Thiamine biosynthesis</keyword>
<keyword id="KW-0786">Thiamine pyrophosphate</keyword>
<keyword id="KW-0808">Transferase</keyword>
<sequence>MQQSPHSPQSQSLSASAVDSAVPLSKLQQTYAVIPRERPQTPLLDSVDSPADLKTFSSAELITLADELRLFVLYSAGQSGGHFGANLGVIELTIALHYLLDTPQDQIVWDVGHQAYAHKVLTGRRDQLGTIRSKTGLTAFPERAESVYDTFGVGHSSTSISAGLGMSLALRYQGRAQTVACIIGDGAMTGGMAFEAMNDAVQQDADLMVILNDNDMSISCSIGGFSRHLAMLWESGYQVDISDAGEPILCQRPDMQAFDRRKRHKEQRDVPQLEDNLFKAIGFTYFGPFDGHNIPELLRVLSLAKQVKGPVLVHIYTTKGKGFAPAELDPVGYHAISSLPAEDNAPKTEKAAIKPSLKYSQVFGQFLCDKAAQDKKLLAITPAMEEGSGMIEFARQFPERFFDVAIAEQHAVTLAGGMATQGVKPIVAIYSTFLQRGYDQLIHDVALQNLDVMFAIDRAGLVGEDGATHAGVFDFAFLRCVPNMLIAAPKDENECYHLLNTCYEYQGCTAVRYPRGVGTGATIIQPAQIYNIGEAVIESVLGTDDAPKKLALLAFGTMVETAQKAAEMIAKSPLLASSCQLHVVNMRWVKPLDTNLLETLVEQGVTHIATLEEHMIMGGAGSAVNEYLLNESAAFKIHRPTICNIGIPDRFVAHGSQAEQLADCGLDVEGVFNQLQNLLS</sequence>
<evidence type="ECO:0000255" key="1">
    <source>
        <dbReference type="HAMAP-Rule" id="MF_00315"/>
    </source>
</evidence>
<evidence type="ECO:0000256" key="2">
    <source>
        <dbReference type="SAM" id="MobiDB-lite"/>
    </source>
</evidence>
<dbReference type="EC" id="2.2.1.7" evidence="1"/>
<dbReference type="EMBL" id="CP000323">
    <property type="protein sequence ID" value="ABE74029.1"/>
    <property type="molecule type" value="Genomic_DNA"/>
</dbReference>
<dbReference type="RefSeq" id="WP_011512617.1">
    <property type="nucleotide sequence ID" value="NC_007969.1"/>
</dbReference>
<dbReference type="SMR" id="Q1QE74"/>
<dbReference type="STRING" id="335284.Pcryo_0245"/>
<dbReference type="KEGG" id="pcr:Pcryo_0245"/>
<dbReference type="eggNOG" id="COG1154">
    <property type="taxonomic scope" value="Bacteria"/>
</dbReference>
<dbReference type="HOGENOM" id="CLU_009227_1_4_6"/>
<dbReference type="UniPathway" id="UPA00064">
    <property type="reaction ID" value="UER00091"/>
</dbReference>
<dbReference type="Proteomes" id="UP000002425">
    <property type="component" value="Chromosome"/>
</dbReference>
<dbReference type="GO" id="GO:0005829">
    <property type="term" value="C:cytosol"/>
    <property type="evidence" value="ECO:0007669"/>
    <property type="project" value="TreeGrafter"/>
</dbReference>
<dbReference type="GO" id="GO:0008661">
    <property type="term" value="F:1-deoxy-D-xylulose-5-phosphate synthase activity"/>
    <property type="evidence" value="ECO:0007669"/>
    <property type="project" value="UniProtKB-UniRule"/>
</dbReference>
<dbReference type="GO" id="GO:0000287">
    <property type="term" value="F:magnesium ion binding"/>
    <property type="evidence" value="ECO:0007669"/>
    <property type="project" value="UniProtKB-UniRule"/>
</dbReference>
<dbReference type="GO" id="GO:0030976">
    <property type="term" value="F:thiamine pyrophosphate binding"/>
    <property type="evidence" value="ECO:0007669"/>
    <property type="project" value="UniProtKB-UniRule"/>
</dbReference>
<dbReference type="GO" id="GO:0052865">
    <property type="term" value="P:1-deoxy-D-xylulose 5-phosphate biosynthetic process"/>
    <property type="evidence" value="ECO:0007669"/>
    <property type="project" value="UniProtKB-UniPathway"/>
</dbReference>
<dbReference type="GO" id="GO:0019288">
    <property type="term" value="P:isopentenyl diphosphate biosynthetic process, methylerythritol 4-phosphate pathway"/>
    <property type="evidence" value="ECO:0007669"/>
    <property type="project" value="TreeGrafter"/>
</dbReference>
<dbReference type="GO" id="GO:0016114">
    <property type="term" value="P:terpenoid biosynthetic process"/>
    <property type="evidence" value="ECO:0007669"/>
    <property type="project" value="UniProtKB-UniRule"/>
</dbReference>
<dbReference type="GO" id="GO:0009228">
    <property type="term" value="P:thiamine biosynthetic process"/>
    <property type="evidence" value="ECO:0007669"/>
    <property type="project" value="UniProtKB-UniRule"/>
</dbReference>
<dbReference type="CDD" id="cd02007">
    <property type="entry name" value="TPP_DXS"/>
    <property type="match status" value="1"/>
</dbReference>
<dbReference type="CDD" id="cd07033">
    <property type="entry name" value="TPP_PYR_DXS_TK_like"/>
    <property type="match status" value="1"/>
</dbReference>
<dbReference type="FunFam" id="3.40.50.970:FF:000005">
    <property type="entry name" value="1-deoxy-D-xylulose-5-phosphate synthase"/>
    <property type="match status" value="1"/>
</dbReference>
<dbReference type="Gene3D" id="3.40.50.920">
    <property type="match status" value="1"/>
</dbReference>
<dbReference type="Gene3D" id="3.40.50.970">
    <property type="match status" value="2"/>
</dbReference>
<dbReference type="HAMAP" id="MF_00315">
    <property type="entry name" value="DXP_synth"/>
    <property type="match status" value="1"/>
</dbReference>
<dbReference type="InterPro" id="IPR005477">
    <property type="entry name" value="Dxylulose-5-P_synthase"/>
</dbReference>
<dbReference type="InterPro" id="IPR029061">
    <property type="entry name" value="THDP-binding"/>
</dbReference>
<dbReference type="InterPro" id="IPR009014">
    <property type="entry name" value="Transketo_C/PFOR_II"/>
</dbReference>
<dbReference type="InterPro" id="IPR005475">
    <property type="entry name" value="Transketolase-like_Pyr-bd"/>
</dbReference>
<dbReference type="InterPro" id="IPR020826">
    <property type="entry name" value="Transketolase_BS"/>
</dbReference>
<dbReference type="InterPro" id="IPR033248">
    <property type="entry name" value="Transketolase_C"/>
</dbReference>
<dbReference type="NCBIfam" id="TIGR00204">
    <property type="entry name" value="dxs"/>
    <property type="match status" value="1"/>
</dbReference>
<dbReference type="NCBIfam" id="NF003933">
    <property type="entry name" value="PRK05444.2-2"/>
    <property type="match status" value="1"/>
</dbReference>
<dbReference type="PANTHER" id="PTHR43322">
    <property type="entry name" value="1-D-DEOXYXYLULOSE 5-PHOSPHATE SYNTHASE-RELATED"/>
    <property type="match status" value="1"/>
</dbReference>
<dbReference type="PANTHER" id="PTHR43322:SF5">
    <property type="entry name" value="1-DEOXY-D-XYLULOSE-5-PHOSPHATE SYNTHASE, CHLOROPLASTIC"/>
    <property type="match status" value="1"/>
</dbReference>
<dbReference type="Pfam" id="PF13292">
    <property type="entry name" value="DXP_synthase_N"/>
    <property type="match status" value="1"/>
</dbReference>
<dbReference type="Pfam" id="PF02779">
    <property type="entry name" value="Transket_pyr"/>
    <property type="match status" value="1"/>
</dbReference>
<dbReference type="Pfam" id="PF02780">
    <property type="entry name" value="Transketolase_C"/>
    <property type="match status" value="1"/>
</dbReference>
<dbReference type="SMART" id="SM00861">
    <property type="entry name" value="Transket_pyr"/>
    <property type="match status" value="1"/>
</dbReference>
<dbReference type="SUPFAM" id="SSF52518">
    <property type="entry name" value="Thiamin diphosphate-binding fold (THDP-binding)"/>
    <property type="match status" value="2"/>
</dbReference>
<dbReference type="SUPFAM" id="SSF52922">
    <property type="entry name" value="TK C-terminal domain-like"/>
    <property type="match status" value="1"/>
</dbReference>
<dbReference type="PROSITE" id="PS00802">
    <property type="entry name" value="TRANSKETOLASE_2"/>
    <property type="match status" value="1"/>
</dbReference>